<comment type="function">
    <text evidence="1">Catalyzes the hydrolysis of N-formyl-L-kynurenine to L-kynurenine, the second step in the kynurenine pathway of tryptophan degradation.</text>
</comment>
<comment type="catalytic activity">
    <reaction evidence="1">
        <text>N-formyl-L-kynurenine + H2O = L-kynurenine + formate + H(+)</text>
        <dbReference type="Rhea" id="RHEA:13009"/>
        <dbReference type="ChEBI" id="CHEBI:15377"/>
        <dbReference type="ChEBI" id="CHEBI:15378"/>
        <dbReference type="ChEBI" id="CHEBI:15740"/>
        <dbReference type="ChEBI" id="CHEBI:57959"/>
        <dbReference type="ChEBI" id="CHEBI:58629"/>
        <dbReference type="EC" id="3.5.1.9"/>
    </reaction>
</comment>
<comment type="cofactor">
    <cofactor evidence="1">
        <name>Zn(2+)</name>
        <dbReference type="ChEBI" id="CHEBI:29105"/>
    </cofactor>
    <text evidence="1">Binds 2 zinc ions per subunit.</text>
</comment>
<comment type="pathway">
    <text evidence="1">Amino-acid degradation; L-tryptophan degradation via kynurenine pathway; L-kynurenine from L-tryptophan: step 2/2.</text>
</comment>
<comment type="subunit">
    <text evidence="1">Homodimer.</text>
</comment>
<comment type="similarity">
    <text evidence="1">Belongs to the Cyclase 1 superfamily. KynB family.</text>
</comment>
<organism>
    <name type="scientific">Cupriavidus taiwanensis (strain DSM 17343 / BCRC 17206 / CCUG 44338 / CIP 107171 / LMG 19424 / R1)</name>
    <name type="common">Ralstonia taiwanensis (strain LMG 19424)</name>
    <dbReference type="NCBI Taxonomy" id="977880"/>
    <lineage>
        <taxon>Bacteria</taxon>
        <taxon>Pseudomonadati</taxon>
        <taxon>Pseudomonadota</taxon>
        <taxon>Betaproteobacteria</taxon>
        <taxon>Burkholderiales</taxon>
        <taxon>Burkholderiaceae</taxon>
        <taxon>Cupriavidus</taxon>
    </lineage>
</organism>
<keyword id="KW-0378">Hydrolase</keyword>
<keyword id="KW-0479">Metal-binding</keyword>
<keyword id="KW-0823">Tryptophan catabolism</keyword>
<keyword id="KW-0862">Zinc</keyword>
<name>KYNB_CUPTR</name>
<reference key="1">
    <citation type="journal article" date="2008" name="Genome Res.">
        <title>Genome sequence of the beta-rhizobium Cupriavidus taiwanensis and comparative genomics of rhizobia.</title>
        <authorList>
            <person name="Amadou C."/>
            <person name="Pascal G."/>
            <person name="Mangenot S."/>
            <person name="Glew M."/>
            <person name="Bontemps C."/>
            <person name="Capela D."/>
            <person name="Carrere S."/>
            <person name="Cruveiller S."/>
            <person name="Dossat C."/>
            <person name="Lajus A."/>
            <person name="Marchetti M."/>
            <person name="Poinsot V."/>
            <person name="Rouy Z."/>
            <person name="Servin B."/>
            <person name="Saad M."/>
            <person name="Schenowitz C."/>
            <person name="Barbe V."/>
            <person name="Batut J."/>
            <person name="Medigue C."/>
            <person name="Masson-Boivin C."/>
        </authorList>
    </citation>
    <scope>NUCLEOTIDE SEQUENCE [LARGE SCALE GENOMIC DNA]</scope>
    <source>
        <strain>DSM 17343 / BCRC 17206 / CCUG 44338 / CIP 107171 / LMG 19424 / R1</strain>
    </source>
</reference>
<gene>
    <name evidence="1" type="primary">kynB</name>
    <name type="ordered locus">RALTA_A2303</name>
</gene>
<protein>
    <recommendedName>
        <fullName evidence="1">Kynurenine formamidase</fullName>
        <shortName evidence="1">KFA</shortName>
        <shortName evidence="1">KFase</shortName>
        <ecNumber evidence="1">3.5.1.9</ecNumber>
    </recommendedName>
    <alternativeName>
        <fullName evidence="1">Arylformamidase</fullName>
    </alternativeName>
    <alternativeName>
        <fullName evidence="1">N-formylkynurenine formamidase</fullName>
        <shortName evidence="1">FKF</shortName>
    </alternativeName>
</protein>
<dbReference type="EC" id="3.5.1.9" evidence="1"/>
<dbReference type="EMBL" id="CU633749">
    <property type="protein sequence ID" value="CAQ70237.1"/>
    <property type="molecule type" value="Genomic_DNA"/>
</dbReference>
<dbReference type="RefSeq" id="WP_012353540.1">
    <property type="nucleotide sequence ID" value="NC_010528.1"/>
</dbReference>
<dbReference type="SMR" id="B3R5Q1"/>
<dbReference type="GeneID" id="29761975"/>
<dbReference type="KEGG" id="cti:RALTA_A2303"/>
<dbReference type="eggNOG" id="COG1878">
    <property type="taxonomic scope" value="Bacteria"/>
</dbReference>
<dbReference type="HOGENOM" id="CLU_030671_3_1_4"/>
<dbReference type="BioCyc" id="CTAI977880:RALTA_RS11175-MONOMER"/>
<dbReference type="UniPathway" id="UPA00333">
    <property type="reaction ID" value="UER00454"/>
</dbReference>
<dbReference type="Proteomes" id="UP000001692">
    <property type="component" value="Chromosome 1"/>
</dbReference>
<dbReference type="GO" id="GO:0004061">
    <property type="term" value="F:arylformamidase activity"/>
    <property type="evidence" value="ECO:0000250"/>
    <property type="project" value="UniProtKB"/>
</dbReference>
<dbReference type="GO" id="GO:0004328">
    <property type="term" value="F:formamidase activity"/>
    <property type="evidence" value="ECO:0007669"/>
    <property type="project" value="InterPro"/>
</dbReference>
<dbReference type="GO" id="GO:0008270">
    <property type="term" value="F:zinc ion binding"/>
    <property type="evidence" value="ECO:0007669"/>
    <property type="project" value="UniProtKB-UniRule"/>
</dbReference>
<dbReference type="GO" id="GO:0043420">
    <property type="term" value="P:anthranilate metabolic process"/>
    <property type="evidence" value="ECO:0000250"/>
    <property type="project" value="UniProtKB"/>
</dbReference>
<dbReference type="GO" id="GO:0019441">
    <property type="term" value="P:L-tryptophan catabolic process to kynurenine"/>
    <property type="evidence" value="ECO:0000250"/>
    <property type="project" value="UniProtKB"/>
</dbReference>
<dbReference type="FunFam" id="3.50.30.50:FF:000001">
    <property type="entry name" value="Kynurenine formamidase"/>
    <property type="match status" value="1"/>
</dbReference>
<dbReference type="Gene3D" id="3.50.30.50">
    <property type="entry name" value="Putative cyclase"/>
    <property type="match status" value="1"/>
</dbReference>
<dbReference type="HAMAP" id="MF_01969">
    <property type="entry name" value="KynB"/>
    <property type="match status" value="1"/>
</dbReference>
<dbReference type="InterPro" id="IPR007325">
    <property type="entry name" value="KFase/CYL"/>
</dbReference>
<dbReference type="InterPro" id="IPR037175">
    <property type="entry name" value="KFase_sf"/>
</dbReference>
<dbReference type="InterPro" id="IPR017484">
    <property type="entry name" value="Kynurenine_formamidase_bac"/>
</dbReference>
<dbReference type="NCBIfam" id="TIGR03035">
    <property type="entry name" value="trp_arylform"/>
    <property type="match status" value="1"/>
</dbReference>
<dbReference type="PANTHER" id="PTHR31118">
    <property type="entry name" value="CYCLASE-LIKE PROTEIN 2"/>
    <property type="match status" value="1"/>
</dbReference>
<dbReference type="PANTHER" id="PTHR31118:SF32">
    <property type="entry name" value="KYNURENINE FORMAMIDASE"/>
    <property type="match status" value="1"/>
</dbReference>
<dbReference type="Pfam" id="PF04199">
    <property type="entry name" value="Cyclase"/>
    <property type="match status" value="1"/>
</dbReference>
<dbReference type="SUPFAM" id="SSF102198">
    <property type="entry name" value="Putative cyclase"/>
    <property type="match status" value="1"/>
</dbReference>
<sequence>MTAPNPDPRRLWDISPPLSPATPVWPGDTPFQQQPAWQIDAQCPVNVGRITLSPHTGAHADAPLHYAADGAPIGAVPLAPYLGRCRVIHCIGAAPLVQPHHVEHALDALPPRVLLRTYRQAPLAQWDPDFCAVSPDTIALLAAHGVQLVGIDTPSLDPQDSKTMDAHNAVRRHGLAILEGIVLDQVDAGDYELIALPLRFAALDASPVRAVLRSLD</sequence>
<proteinExistence type="inferred from homology"/>
<feature type="chain" id="PRO_0000362120" description="Kynurenine formamidase">
    <location>
        <begin position="1"/>
        <end position="216"/>
    </location>
</feature>
<feature type="active site" description="Proton donor/acceptor" evidence="1">
    <location>
        <position position="65"/>
    </location>
</feature>
<feature type="binding site" evidence="1">
    <location>
        <position position="25"/>
    </location>
    <ligand>
        <name>substrate</name>
    </ligand>
</feature>
<feature type="binding site" evidence="1">
    <location>
        <position position="55"/>
    </location>
    <ligand>
        <name>Zn(2+)</name>
        <dbReference type="ChEBI" id="CHEBI:29105"/>
        <label>1</label>
    </ligand>
</feature>
<feature type="binding site" evidence="1">
    <location>
        <position position="59"/>
    </location>
    <ligand>
        <name>Zn(2+)</name>
        <dbReference type="ChEBI" id="CHEBI:29105"/>
        <label>1</label>
    </ligand>
</feature>
<feature type="binding site" evidence="1">
    <location>
        <position position="61"/>
    </location>
    <ligand>
        <name>Zn(2+)</name>
        <dbReference type="ChEBI" id="CHEBI:29105"/>
        <label>1</label>
    </ligand>
</feature>
<feature type="binding site" evidence="1">
    <location>
        <position position="61"/>
    </location>
    <ligand>
        <name>Zn(2+)</name>
        <dbReference type="ChEBI" id="CHEBI:29105"/>
        <label>2</label>
    </ligand>
</feature>
<feature type="binding site" evidence="1">
    <location>
        <position position="167"/>
    </location>
    <ligand>
        <name>Zn(2+)</name>
        <dbReference type="ChEBI" id="CHEBI:29105"/>
        <label>2</label>
    </ligand>
</feature>
<feature type="binding site" evidence="1">
    <location>
        <position position="179"/>
    </location>
    <ligand>
        <name>Zn(2+)</name>
        <dbReference type="ChEBI" id="CHEBI:29105"/>
        <label>1</label>
    </ligand>
</feature>
<feature type="binding site" evidence="1">
    <location>
        <position position="179"/>
    </location>
    <ligand>
        <name>Zn(2+)</name>
        <dbReference type="ChEBI" id="CHEBI:29105"/>
        <label>2</label>
    </ligand>
</feature>
<evidence type="ECO:0000255" key="1">
    <source>
        <dbReference type="HAMAP-Rule" id="MF_01969"/>
    </source>
</evidence>
<accession>B3R5Q1</accession>